<sequence>MNRAYGKMLGVGRALGGRVVTNRDLEAVLDTSDEWISTRTGIRERRFVAEGQSCVTLAVEAARRALEHAGVPGASVDLVVCATSTNPESMPSVACLVGEAVGAAGVGAMDLSAACAGFAYAASVAGAMLASGLASRVLLVGADEMTSIVNVRDRSTGILFGDGAGAVVLDRGDGSSGFVDHILGADGRMAPLGRAGHPGDGKRPLYQNGREIFRFAVRMFPEMVEKIMARNGISLDEVQYIIPHQANARIIQAAARKLEVPEEKLVVNVDRFGNTSAASIPLSYPDIFDGLEPGKYIITVGFGFGLTWAANLYRI</sequence>
<feature type="chain" id="PRO_1000056403" description="Beta-ketoacyl-[acyl-carrier-protein] synthase III">
    <location>
        <begin position="1"/>
        <end position="315"/>
    </location>
</feature>
<feature type="region of interest" description="ACP-binding" evidence="1">
    <location>
        <begin position="245"/>
        <end position="249"/>
    </location>
</feature>
<feature type="active site" evidence="1">
    <location>
        <position position="115"/>
    </location>
</feature>
<feature type="active site" evidence="1">
    <location>
        <position position="244"/>
    </location>
</feature>
<feature type="active site" evidence="1">
    <location>
        <position position="274"/>
    </location>
</feature>
<evidence type="ECO:0000255" key="1">
    <source>
        <dbReference type="HAMAP-Rule" id="MF_01815"/>
    </source>
</evidence>
<gene>
    <name evidence="1" type="primary">fabH</name>
    <name type="ordered locus">Rxyl_1378</name>
</gene>
<dbReference type="EC" id="2.3.1.180" evidence="1"/>
<dbReference type="EMBL" id="CP000386">
    <property type="protein sequence ID" value="ABG04341.1"/>
    <property type="molecule type" value="Genomic_DNA"/>
</dbReference>
<dbReference type="RefSeq" id="WP_011564358.1">
    <property type="nucleotide sequence ID" value="NC_008148.1"/>
</dbReference>
<dbReference type="SMR" id="Q1AW87"/>
<dbReference type="STRING" id="266117.Rxyl_1378"/>
<dbReference type="KEGG" id="rxy:Rxyl_1378"/>
<dbReference type="eggNOG" id="COG0332">
    <property type="taxonomic scope" value="Bacteria"/>
</dbReference>
<dbReference type="HOGENOM" id="CLU_039592_3_1_11"/>
<dbReference type="OrthoDB" id="9815506at2"/>
<dbReference type="PhylomeDB" id="Q1AW87"/>
<dbReference type="UniPathway" id="UPA00094"/>
<dbReference type="Proteomes" id="UP000006637">
    <property type="component" value="Chromosome"/>
</dbReference>
<dbReference type="GO" id="GO:0005737">
    <property type="term" value="C:cytoplasm"/>
    <property type="evidence" value="ECO:0007669"/>
    <property type="project" value="UniProtKB-SubCell"/>
</dbReference>
<dbReference type="GO" id="GO:0004315">
    <property type="term" value="F:3-oxoacyl-[acyl-carrier-protein] synthase activity"/>
    <property type="evidence" value="ECO:0007669"/>
    <property type="project" value="InterPro"/>
</dbReference>
<dbReference type="GO" id="GO:0033818">
    <property type="term" value="F:beta-ketoacyl-acyl-carrier-protein synthase III activity"/>
    <property type="evidence" value="ECO:0007669"/>
    <property type="project" value="UniProtKB-UniRule"/>
</dbReference>
<dbReference type="GO" id="GO:0006633">
    <property type="term" value="P:fatty acid biosynthetic process"/>
    <property type="evidence" value="ECO:0007669"/>
    <property type="project" value="UniProtKB-UniRule"/>
</dbReference>
<dbReference type="GO" id="GO:0044550">
    <property type="term" value="P:secondary metabolite biosynthetic process"/>
    <property type="evidence" value="ECO:0007669"/>
    <property type="project" value="TreeGrafter"/>
</dbReference>
<dbReference type="CDD" id="cd00830">
    <property type="entry name" value="KAS_III"/>
    <property type="match status" value="1"/>
</dbReference>
<dbReference type="Gene3D" id="3.40.47.10">
    <property type="match status" value="1"/>
</dbReference>
<dbReference type="HAMAP" id="MF_01815">
    <property type="entry name" value="FabH"/>
    <property type="match status" value="1"/>
</dbReference>
<dbReference type="InterPro" id="IPR013747">
    <property type="entry name" value="ACP_syn_III_C"/>
</dbReference>
<dbReference type="InterPro" id="IPR013751">
    <property type="entry name" value="ACP_syn_III_N"/>
</dbReference>
<dbReference type="InterPro" id="IPR004655">
    <property type="entry name" value="FabH"/>
</dbReference>
<dbReference type="InterPro" id="IPR016039">
    <property type="entry name" value="Thiolase-like"/>
</dbReference>
<dbReference type="NCBIfam" id="TIGR00747">
    <property type="entry name" value="fabH"/>
    <property type="match status" value="1"/>
</dbReference>
<dbReference type="NCBIfam" id="NF006829">
    <property type="entry name" value="PRK09352.1"/>
    <property type="match status" value="1"/>
</dbReference>
<dbReference type="PANTHER" id="PTHR34069">
    <property type="entry name" value="3-OXOACYL-[ACYL-CARRIER-PROTEIN] SYNTHASE 3"/>
    <property type="match status" value="1"/>
</dbReference>
<dbReference type="PANTHER" id="PTHR34069:SF2">
    <property type="entry name" value="BETA-KETOACYL-[ACYL-CARRIER-PROTEIN] SYNTHASE III"/>
    <property type="match status" value="1"/>
</dbReference>
<dbReference type="Pfam" id="PF08545">
    <property type="entry name" value="ACP_syn_III"/>
    <property type="match status" value="1"/>
</dbReference>
<dbReference type="Pfam" id="PF08541">
    <property type="entry name" value="ACP_syn_III_C"/>
    <property type="match status" value="1"/>
</dbReference>
<dbReference type="SUPFAM" id="SSF53901">
    <property type="entry name" value="Thiolase-like"/>
    <property type="match status" value="1"/>
</dbReference>
<reference key="1">
    <citation type="submission" date="2006-06" db="EMBL/GenBank/DDBJ databases">
        <title>Complete sequence of Rubrobacter xylanophilus DSM 9941.</title>
        <authorList>
            <consortium name="US DOE Joint Genome Institute"/>
            <person name="Copeland A."/>
            <person name="Lucas S."/>
            <person name="Lapidus A."/>
            <person name="Barry K."/>
            <person name="Detter J.C."/>
            <person name="Glavina del Rio T."/>
            <person name="Hammon N."/>
            <person name="Israni S."/>
            <person name="Dalin E."/>
            <person name="Tice H."/>
            <person name="Pitluck S."/>
            <person name="Munk A.C."/>
            <person name="Brettin T."/>
            <person name="Bruce D."/>
            <person name="Han C."/>
            <person name="Tapia R."/>
            <person name="Gilna P."/>
            <person name="Schmutz J."/>
            <person name="Larimer F."/>
            <person name="Land M."/>
            <person name="Hauser L."/>
            <person name="Kyrpides N."/>
            <person name="Lykidis A."/>
            <person name="da Costa M.S."/>
            <person name="Rainey F.A."/>
            <person name="Empadinhas N."/>
            <person name="Jolivet E."/>
            <person name="Battista J.R."/>
            <person name="Richardson P."/>
        </authorList>
    </citation>
    <scope>NUCLEOTIDE SEQUENCE [LARGE SCALE GENOMIC DNA]</scope>
    <source>
        <strain>DSM 9941 / JCM 11954 / NBRC 16129 / PRD-1</strain>
    </source>
</reference>
<protein>
    <recommendedName>
        <fullName evidence="1">Beta-ketoacyl-[acyl-carrier-protein] synthase III</fullName>
        <shortName evidence="1">Beta-ketoacyl-ACP synthase III</shortName>
        <shortName evidence="1">KAS III</shortName>
        <ecNumber evidence="1">2.3.1.180</ecNumber>
    </recommendedName>
    <alternativeName>
        <fullName evidence="1">3-oxoacyl-[acyl-carrier-protein] synthase 3</fullName>
    </alternativeName>
    <alternativeName>
        <fullName evidence="1">3-oxoacyl-[acyl-carrier-protein] synthase III</fullName>
    </alternativeName>
</protein>
<name>FABH_RUBXD</name>
<organism>
    <name type="scientific">Rubrobacter xylanophilus (strain DSM 9941 / JCM 11954 / NBRC 16129 / PRD-1)</name>
    <dbReference type="NCBI Taxonomy" id="266117"/>
    <lineage>
        <taxon>Bacteria</taxon>
        <taxon>Bacillati</taxon>
        <taxon>Actinomycetota</taxon>
        <taxon>Rubrobacteria</taxon>
        <taxon>Rubrobacterales</taxon>
        <taxon>Rubrobacteraceae</taxon>
        <taxon>Rubrobacter</taxon>
    </lineage>
</organism>
<accession>Q1AW87</accession>
<keyword id="KW-0012">Acyltransferase</keyword>
<keyword id="KW-0963">Cytoplasm</keyword>
<keyword id="KW-0275">Fatty acid biosynthesis</keyword>
<keyword id="KW-0276">Fatty acid metabolism</keyword>
<keyword id="KW-0444">Lipid biosynthesis</keyword>
<keyword id="KW-0443">Lipid metabolism</keyword>
<keyword id="KW-0511">Multifunctional enzyme</keyword>
<keyword id="KW-1185">Reference proteome</keyword>
<keyword id="KW-0808">Transferase</keyword>
<proteinExistence type="inferred from homology"/>
<comment type="function">
    <text evidence="1">Catalyzes the condensation reaction of fatty acid synthesis by the addition to an acyl acceptor of two carbons from malonyl-ACP. Catalyzes the first condensation reaction which initiates fatty acid synthesis and may therefore play a role in governing the total rate of fatty acid production. Possesses both acetoacetyl-ACP synthase and acetyl transacylase activities. Its substrate specificity determines the biosynthesis of branched-chain and/or straight-chain of fatty acids.</text>
</comment>
<comment type="catalytic activity">
    <reaction evidence="1">
        <text>malonyl-[ACP] + acetyl-CoA + H(+) = 3-oxobutanoyl-[ACP] + CO2 + CoA</text>
        <dbReference type="Rhea" id="RHEA:12080"/>
        <dbReference type="Rhea" id="RHEA-COMP:9623"/>
        <dbReference type="Rhea" id="RHEA-COMP:9625"/>
        <dbReference type="ChEBI" id="CHEBI:15378"/>
        <dbReference type="ChEBI" id="CHEBI:16526"/>
        <dbReference type="ChEBI" id="CHEBI:57287"/>
        <dbReference type="ChEBI" id="CHEBI:57288"/>
        <dbReference type="ChEBI" id="CHEBI:78449"/>
        <dbReference type="ChEBI" id="CHEBI:78450"/>
        <dbReference type="EC" id="2.3.1.180"/>
    </reaction>
</comment>
<comment type="pathway">
    <text evidence="1">Lipid metabolism; fatty acid biosynthesis.</text>
</comment>
<comment type="subunit">
    <text evidence="1">Homodimer.</text>
</comment>
<comment type="subcellular location">
    <subcellularLocation>
        <location evidence="1">Cytoplasm</location>
    </subcellularLocation>
</comment>
<comment type="domain">
    <text evidence="1">The last Arg residue of the ACP-binding site is essential for the weak association between ACP/AcpP and FabH.</text>
</comment>
<comment type="similarity">
    <text evidence="1">Belongs to the thiolase-like superfamily. FabH family.</text>
</comment>